<evidence type="ECO:0000255" key="1">
    <source>
        <dbReference type="HAMAP-Rule" id="MF_00392"/>
    </source>
</evidence>
<keyword id="KW-0328">Glycosyltransferase</keyword>
<keyword id="KW-0441">Lipid A biosynthesis</keyword>
<keyword id="KW-0444">Lipid biosynthesis</keyword>
<keyword id="KW-0443">Lipid metabolism</keyword>
<keyword id="KW-0808">Transferase</keyword>
<organism>
    <name type="scientific">Neisseria meningitidis serogroup C / serotype 2a (strain ATCC 700532 / DSM 15464 / FAM18)</name>
    <dbReference type="NCBI Taxonomy" id="272831"/>
    <lineage>
        <taxon>Bacteria</taxon>
        <taxon>Pseudomonadati</taxon>
        <taxon>Pseudomonadota</taxon>
        <taxon>Betaproteobacteria</taxon>
        <taxon>Neisseriales</taxon>
        <taxon>Neisseriaceae</taxon>
        <taxon>Neisseria</taxon>
    </lineage>
</organism>
<feature type="chain" id="PRO_1000049405" description="Lipid-A-disaccharide synthase">
    <location>
        <begin position="1"/>
        <end position="384"/>
    </location>
</feature>
<sequence length="384" mass="42446">MVDKKSPLIAVSVGEASGDLLGAHLIRAIRKRCPQARFVGIGGELMKAEGFESLYDQERLAVRGFAEVVRRLPEILRIRRGLVRDLLSLKPDVFVGIDAPDFNLGVAERLKRSGIPTVHYVSPSVWAWRRERVGKIVHQVNRVLCLFPMEPQLYLDAGGRAEFVGHPMAQLMPLEDDRETARKTLGVDAGIPVFALLPGSRVSEIDYMAPVFFQTALLLLERYPAARFLLPAATEATKRRLAEVLQRPEFAGLPLTVIDRQSETVCRAADAVLVTSGTATLEVALCKRPMVISYKISPLTYAYVKRKIKVPHVGLPNILLGKEAVPELLQSEAKPEKLAAALADWYEHPDKVAALQQDFRALHLLLKKDTADLAARAVLEEAGC</sequence>
<reference key="1">
    <citation type="journal article" date="2007" name="PLoS Genet.">
        <title>Meningococcal genetic variation mechanisms viewed through comparative analysis of serogroup C strain FAM18.</title>
        <authorList>
            <person name="Bentley S.D."/>
            <person name="Vernikos G.S."/>
            <person name="Snyder L.A.S."/>
            <person name="Churcher C."/>
            <person name="Arrowsmith C."/>
            <person name="Chillingworth T."/>
            <person name="Cronin A."/>
            <person name="Davis P.H."/>
            <person name="Holroyd N.E."/>
            <person name="Jagels K."/>
            <person name="Maddison M."/>
            <person name="Moule S."/>
            <person name="Rabbinowitsch E."/>
            <person name="Sharp S."/>
            <person name="Unwin L."/>
            <person name="Whitehead S."/>
            <person name="Quail M.A."/>
            <person name="Achtman M."/>
            <person name="Barrell B.G."/>
            <person name="Saunders N.J."/>
            <person name="Parkhill J."/>
        </authorList>
    </citation>
    <scope>NUCLEOTIDE SEQUENCE [LARGE SCALE GENOMIC DNA]</scope>
    <source>
        <strain>ATCC 700532 / DSM 15464 / FAM18</strain>
    </source>
</reference>
<gene>
    <name evidence="1" type="primary">lpxB</name>
    <name type="ordered locus">NMC0191</name>
</gene>
<accession>A1KRN0</accession>
<name>LPXB_NEIMF</name>
<comment type="function">
    <text evidence="1">Condensation of UDP-2,3-diacylglucosamine and 2,3-diacylglucosamine-1-phosphate to form lipid A disaccharide, a precursor of lipid A, a phosphorylated glycolipid that anchors the lipopolysaccharide to the outer membrane of the cell.</text>
</comment>
<comment type="catalytic activity">
    <reaction evidence="1">
        <text>a lipid X + a UDP-2-N,3-O-bis[(3R)-3-hydroxyacyl]-alpha-D-glucosamine = a lipid A disaccharide + UDP + H(+)</text>
        <dbReference type="Rhea" id="RHEA:67828"/>
        <dbReference type="ChEBI" id="CHEBI:15378"/>
        <dbReference type="ChEBI" id="CHEBI:58223"/>
        <dbReference type="ChEBI" id="CHEBI:137748"/>
        <dbReference type="ChEBI" id="CHEBI:176338"/>
        <dbReference type="ChEBI" id="CHEBI:176343"/>
        <dbReference type="EC" id="2.4.1.182"/>
    </reaction>
</comment>
<comment type="pathway">
    <text evidence="1">Bacterial outer membrane biogenesis; LPS lipid A biosynthesis.</text>
</comment>
<comment type="similarity">
    <text evidence="1">Belongs to the LpxB family.</text>
</comment>
<dbReference type="EC" id="2.4.1.182" evidence="1"/>
<dbReference type="EMBL" id="AM421808">
    <property type="protein sequence ID" value="CAM09508.1"/>
    <property type="molecule type" value="Genomic_DNA"/>
</dbReference>
<dbReference type="RefSeq" id="WP_002220209.1">
    <property type="nucleotide sequence ID" value="NC_008767.1"/>
</dbReference>
<dbReference type="SMR" id="A1KRN0"/>
<dbReference type="CAZy" id="GT19">
    <property type="family name" value="Glycosyltransferase Family 19"/>
</dbReference>
<dbReference type="KEGG" id="nmc:NMC0191"/>
<dbReference type="HOGENOM" id="CLU_036577_3_0_4"/>
<dbReference type="UniPathway" id="UPA00973"/>
<dbReference type="Proteomes" id="UP000002286">
    <property type="component" value="Chromosome"/>
</dbReference>
<dbReference type="GO" id="GO:0016020">
    <property type="term" value="C:membrane"/>
    <property type="evidence" value="ECO:0007669"/>
    <property type="project" value="GOC"/>
</dbReference>
<dbReference type="GO" id="GO:0008915">
    <property type="term" value="F:lipid-A-disaccharide synthase activity"/>
    <property type="evidence" value="ECO:0007669"/>
    <property type="project" value="UniProtKB-UniRule"/>
</dbReference>
<dbReference type="GO" id="GO:0005543">
    <property type="term" value="F:phospholipid binding"/>
    <property type="evidence" value="ECO:0007669"/>
    <property type="project" value="TreeGrafter"/>
</dbReference>
<dbReference type="GO" id="GO:0009245">
    <property type="term" value="P:lipid A biosynthetic process"/>
    <property type="evidence" value="ECO:0007669"/>
    <property type="project" value="UniProtKB-UniRule"/>
</dbReference>
<dbReference type="HAMAP" id="MF_00392">
    <property type="entry name" value="LpxB"/>
    <property type="match status" value="1"/>
</dbReference>
<dbReference type="InterPro" id="IPR003835">
    <property type="entry name" value="Glyco_trans_19"/>
</dbReference>
<dbReference type="NCBIfam" id="TIGR00215">
    <property type="entry name" value="lpxB"/>
    <property type="match status" value="1"/>
</dbReference>
<dbReference type="PANTHER" id="PTHR30372">
    <property type="entry name" value="LIPID-A-DISACCHARIDE SYNTHASE"/>
    <property type="match status" value="1"/>
</dbReference>
<dbReference type="PANTHER" id="PTHR30372:SF4">
    <property type="entry name" value="LIPID-A-DISACCHARIDE SYNTHASE, MITOCHONDRIAL-RELATED"/>
    <property type="match status" value="1"/>
</dbReference>
<dbReference type="Pfam" id="PF02684">
    <property type="entry name" value="LpxB"/>
    <property type="match status" value="1"/>
</dbReference>
<dbReference type="SUPFAM" id="SSF53756">
    <property type="entry name" value="UDP-Glycosyltransferase/glycogen phosphorylase"/>
    <property type="match status" value="1"/>
</dbReference>
<protein>
    <recommendedName>
        <fullName evidence="1">Lipid-A-disaccharide synthase</fullName>
        <ecNumber evidence="1">2.4.1.182</ecNumber>
    </recommendedName>
</protein>
<proteinExistence type="inferred from homology"/>